<keyword id="KW-0029">Amino-acid transport</keyword>
<keyword id="KW-0067">ATP-binding</keyword>
<keyword id="KW-1003">Cell membrane</keyword>
<keyword id="KW-0472">Membrane</keyword>
<keyword id="KW-0547">Nucleotide-binding</keyword>
<keyword id="KW-1185">Reference proteome</keyword>
<keyword id="KW-0813">Transport</keyword>
<evidence type="ECO:0000255" key="1">
    <source>
        <dbReference type="PROSITE-ProRule" id="PRU00434"/>
    </source>
</evidence>
<evidence type="ECO:0000305" key="2"/>
<reference key="1">
    <citation type="journal article" date="1996" name="Mol. Microbiol.">
        <title>A glutamate/glutamine/aspartate/asparagine transport operon in Rhodobacter capsulatus.</title>
        <authorList>
            <person name="Zheng S."/>
            <person name="Haselkorn R."/>
        </authorList>
    </citation>
    <scope>NUCLEOTIDE SEQUENCE [GENOMIC DNA]</scope>
    <source>
        <strain>ATCC BAA-309 / NBRC 16581 / SB1003</strain>
    </source>
</reference>
<reference key="2">
    <citation type="journal article" date="2010" name="J. Bacteriol.">
        <title>Complete genome sequence of the photosynthetic purple nonsulfur bacterium Rhodobacter capsulatus SB 1003.</title>
        <authorList>
            <person name="Strnad H."/>
            <person name="Lapidus A."/>
            <person name="Paces J."/>
            <person name="Ulbrich P."/>
            <person name="Vlcek C."/>
            <person name="Paces V."/>
            <person name="Haselkorn R."/>
        </authorList>
    </citation>
    <scope>NUCLEOTIDE SEQUENCE [LARGE SCALE GENOMIC DNA]</scope>
    <source>
        <strain>ATCC BAA-309 / NBRC 16581 / SB1003</strain>
    </source>
</reference>
<name>BZTD_RHOCB</name>
<gene>
    <name type="primary">bztD</name>
    <name type="ordered locus">RCAP_rcc00338</name>
</gene>
<comment type="function">
    <text>Part of a binding-protein-dependent transport system for glutamate, glutamine, aspartate, asparagine. Probably responsible for energy coupling to the transport system.</text>
</comment>
<comment type="subunit">
    <text evidence="2">BztB and BztC form a heterodimer which can form a membrane complex with a homodimer of BztD.</text>
</comment>
<comment type="subcellular location">
    <subcellularLocation>
        <location evidence="2">Cell membrane</location>
        <topology evidence="2">Peripheral membrane protein</topology>
    </subcellularLocation>
</comment>
<comment type="similarity">
    <text evidence="2">Belongs to the ABC transporter superfamily.</text>
</comment>
<organism>
    <name type="scientific">Rhodobacter capsulatus (strain ATCC BAA-309 / NBRC 16581 / SB1003)</name>
    <dbReference type="NCBI Taxonomy" id="272942"/>
    <lineage>
        <taxon>Bacteria</taxon>
        <taxon>Pseudomonadati</taxon>
        <taxon>Pseudomonadota</taxon>
        <taxon>Alphaproteobacteria</taxon>
        <taxon>Rhodobacterales</taxon>
        <taxon>Rhodobacter group</taxon>
        <taxon>Rhodobacter</taxon>
    </lineage>
</organism>
<accession>Q52666</accession>
<accession>D5AM33</accession>
<feature type="chain" id="PRO_0000091967" description="Glutamate/glutamine/aspartate/asparagine transport ATP-binding protein BztD">
    <location>
        <begin position="1"/>
        <end position="263"/>
    </location>
</feature>
<feature type="domain" description="ABC transporter" evidence="1">
    <location>
        <begin position="23"/>
        <end position="257"/>
    </location>
</feature>
<feature type="binding site" evidence="1">
    <location>
        <begin position="55"/>
        <end position="62"/>
    </location>
    <ligand>
        <name>ATP</name>
        <dbReference type="ChEBI" id="CHEBI:30616"/>
    </ligand>
</feature>
<feature type="sequence conflict" description="In Ref. 1; AAB17889." evidence="2" ref="1">
    <original>A</original>
    <variation>T</variation>
    <location>
        <position position="214"/>
    </location>
</feature>
<feature type="sequence conflict" description="In Ref. 1; AAB17889." evidence="2" ref="1">
    <original>R</original>
    <variation>H</variation>
    <location>
        <position position="246"/>
    </location>
</feature>
<protein>
    <recommendedName>
        <fullName>Glutamate/glutamine/aspartate/asparagine transport ATP-binding protein BztD</fullName>
    </recommendedName>
</protein>
<dbReference type="EMBL" id="U37407">
    <property type="protein sequence ID" value="AAB17889.1"/>
    <property type="molecule type" value="Genomic_DNA"/>
</dbReference>
<dbReference type="EMBL" id="CP001312">
    <property type="protein sequence ID" value="ADE84103.1"/>
    <property type="molecule type" value="Genomic_DNA"/>
</dbReference>
<dbReference type="PIR" id="S77604">
    <property type="entry name" value="S77604"/>
</dbReference>
<dbReference type="RefSeq" id="WP_013066083.1">
    <property type="nucleotide sequence ID" value="NC_014034.1"/>
</dbReference>
<dbReference type="SMR" id="Q52666"/>
<dbReference type="STRING" id="272942.RCAP_rcc00338"/>
<dbReference type="TCDB" id="3.A.1.3.7">
    <property type="family name" value="the atp-binding cassette (abc) superfamily"/>
</dbReference>
<dbReference type="GeneID" id="31489295"/>
<dbReference type="KEGG" id="rcp:RCAP_rcc00338"/>
<dbReference type="eggNOG" id="COG1126">
    <property type="taxonomic scope" value="Bacteria"/>
</dbReference>
<dbReference type="HOGENOM" id="CLU_000604_1_22_5"/>
<dbReference type="OrthoDB" id="9802264at2"/>
<dbReference type="Proteomes" id="UP000002361">
    <property type="component" value="Chromosome"/>
</dbReference>
<dbReference type="GO" id="GO:0005886">
    <property type="term" value="C:plasma membrane"/>
    <property type="evidence" value="ECO:0007669"/>
    <property type="project" value="UniProtKB-SubCell"/>
</dbReference>
<dbReference type="GO" id="GO:0015424">
    <property type="term" value="F:ABC-type amino acid transporter activity"/>
    <property type="evidence" value="ECO:0007669"/>
    <property type="project" value="InterPro"/>
</dbReference>
<dbReference type="GO" id="GO:0005524">
    <property type="term" value="F:ATP binding"/>
    <property type="evidence" value="ECO:0007669"/>
    <property type="project" value="UniProtKB-KW"/>
</dbReference>
<dbReference type="GO" id="GO:0016887">
    <property type="term" value="F:ATP hydrolysis activity"/>
    <property type="evidence" value="ECO:0007669"/>
    <property type="project" value="InterPro"/>
</dbReference>
<dbReference type="CDD" id="cd03262">
    <property type="entry name" value="ABC_HisP_GlnQ"/>
    <property type="match status" value="1"/>
</dbReference>
<dbReference type="FunFam" id="3.40.50.300:FF:000020">
    <property type="entry name" value="Amino acid ABC transporter ATP-binding component"/>
    <property type="match status" value="1"/>
</dbReference>
<dbReference type="Gene3D" id="3.40.50.300">
    <property type="entry name" value="P-loop containing nucleotide triphosphate hydrolases"/>
    <property type="match status" value="1"/>
</dbReference>
<dbReference type="InterPro" id="IPR003593">
    <property type="entry name" value="AAA+_ATPase"/>
</dbReference>
<dbReference type="InterPro" id="IPR030679">
    <property type="entry name" value="ABC_ATPase_HisP-typ"/>
</dbReference>
<dbReference type="InterPro" id="IPR003439">
    <property type="entry name" value="ABC_transporter-like_ATP-bd"/>
</dbReference>
<dbReference type="InterPro" id="IPR017871">
    <property type="entry name" value="ABC_transporter-like_CS"/>
</dbReference>
<dbReference type="InterPro" id="IPR050086">
    <property type="entry name" value="MetN_ABC_transporter-like"/>
</dbReference>
<dbReference type="InterPro" id="IPR027417">
    <property type="entry name" value="P-loop_NTPase"/>
</dbReference>
<dbReference type="PANTHER" id="PTHR43166">
    <property type="entry name" value="AMINO ACID IMPORT ATP-BINDING PROTEIN"/>
    <property type="match status" value="1"/>
</dbReference>
<dbReference type="PANTHER" id="PTHR43166:SF4">
    <property type="entry name" value="PHOSPHONATES IMPORT ATP-BINDING PROTEIN PHNC"/>
    <property type="match status" value="1"/>
</dbReference>
<dbReference type="Pfam" id="PF00005">
    <property type="entry name" value="ABC_tran"/>
    <property type="match status" value="1"/>
</dbReference>
<dbReference type="PIRSF" id="PIRSF039085">
    <property type="entry name" value="ABC_ATPase_HisP"/>
    <property type="match status" value="1"/>
</dbReference>
<dbReference type="SMART" id="SM00382">
    <property type="entry name" value="AAA"/>
    <property type="match status" value="1"/>
</dbReference>
<dbReference type="SUPFAM" id="SSF52540">
    <property type="entry name" value="P-loop containing nucleoside triphosphate hydrolases"/>
    <property type="match status" value="1"/>
</dbReference>
<dbReference type="PROSITE" id="PS00211">
    <property type="entry name" value="ABC_TRANSPORTER_1"/>
    <property type="match status" value="1"/>
</dbReference>
<dbReference type="PROSITE" id="PS50893">
    <property type="entry name" value="ABC_TRANSPORTER_2"/>
    <property type="match status" value="1"/>
</dbReference>
<proteinExistence type="inferred from homology"/>
<sequence length="263" mass="30002">MSEPSYDHQVDRSHMQVSDEIAIQISQMNKWYGQFHVLRDINLTVHRGERIVIAGPSGSGKSTMIRCINRLEEHQSGKIIVDGIELTSDLKNIDKVRSEVGMVFQHFNLFPHLTILENLTLAPIWVRKVPKREAEETAMYYLEKVKIPEQAQKYPGQLSGGQQQRVAIARSLCMKPKIMLFDEPTSALDPEMIKEVLDTMIQLAEEGMTMLCVAHEMGFAQAVANRVIFMADGQIVEQNNPHDFFRNPQSERTKQFLSQILGH</sequence>